<accession>A1CRJ0</accession>
<gene>
    <name type="primary">xgeA</name>
    <name type="ORF">ACLA_029940</name>
</gene>
<organism>
    <name type="scientific">Aspergillus clavatus (strain ATCC 1007 / CBS 513.65 / DSM 816 / NCTC 3887 / NRRL 1 / QM 1276 / 107)</name>
    <dbReference type="NCBI Taxonomy" id="344612"/>
    <lineage>
        <taxon>Eukaryota</taxon>
        <taxon>Fungi</taxon>
        <taxon>Dikarya</taxon>
        <taxon>Ascomycota</taxon>
        <taxon>Pezizomycotina</taxon>
        <taxon>Eurotiomycetes</taxon>
        <taxon>Eurotiomycetidae</taxon>
        <taxon>Eurotiales</taxon>
        <taxon>Aspergillaceae</taxon>
        <taxon>Aspergillus</taxon>
        <taxon>Aspergillus subgen. Fumigati</taxon>
    </lineage>
</organism>
<evidence type="ECO:0000250" key="1"/>
<evidence type="ECO:0000255" key="2"/>
<evidence type="ECO:0000305" key="3"/>
<comment type="function">
    <text evidence="1">Catalyzes endohydrolysis of 1,4-beta-D-glucosidic linkages in xyloglucan with retention of the beta-configuration of the glycosyl residues. Specific for xyloglucan and does not hydrolyze other cell wall components (By similarity).</text>
</comment>
<comment type="catalytic activity">
    <reaction>
        <text>xyloglucan + H2O = xyloglucan oligosaccharides.</text>
        <dbReference type="EC" id="3.2.1.151"/>
    </reaction>
</comment>
<comment type="subcellular location">
    <subcellularLocation>
        <location evidence="3">Secreted</location>
    </subcellularLocation>
</comment>
<comment type="similarity">
    <text evidence="3">Belongs to the glycosyl hydrolase 12 (cellulase H) family.</text>
</comment>
<proteinExistence type="inferred from homology"/>
<protein>
    <recommendedName>
        <fullName>Probable xyloglucan-specific endo-beta-1,4-glucanase A</fullName>
        <ecNumber>3.2.1.151</ecNumber>
    </recommendedName>
    <alternativeName>
        <fullName>Xyloglucanase A</fullName>
    </alternativeName>
    <alternativeName>
        <fullName>Xyloglucanendohydrolase A</fullName>
    </alternativeName>
</protein>
<dbReference type="EC" id="3.2.1.151"/>
<dbReference type="EMBL" id="DS027059">
    <property type="protein sequence ID" value="EAW08261.1"/>
    <property type="molecule type" value="Genomic_DNA"/>
</dbReference>
<dbReference type="RefSeq" id="XP_001269687.1">
    <property type="nucleotide sequence ID" value="XM_001269686.1"/>
</dbReference>
<dbReference type="SMR" id="A1CRJ0"/>
<dbReference type="STRING" id="344612.A1CRJ0"/>
<dbReference type="CAZy" id="GH12">
    <property type="family name" value="Glycoside Hydrolase Family 12"/>
</dbReference>
<dbReference type="EnsemblFungi" id="EAW08261">
    <property type="protein sequence ID" value="EAW08261"/>
    <property type="gene ID" value="ACLA_029940"/>
</dbReference>
<dbReference type="GeneID" id="4701658"/>
<dbReference type="KEGG" id="act:ACLA_029940"/>
<dbReference type="VEuPathDB" id="FungiDB:ACLA_029940"/>
<dbReference type="eggNOG" id="ENOG502S675">
    <property type="taxonomic scope" value="Eukaryota"/>
</dbReference>
<dbReference type="HOGENOM" id="CLU_051064_0_1_1"/>
<dbReference type="OMA" id="NLWGQAQ"/>
<dbReference type="OrthoDB" id="95118at2759"/>
<dbReference type="Proteomes" id="UP000006701">
    <property type="component" value="Unassembled WGS sequence"/>
</dbReference>
<dbReference type="GO" id="GO:0005576">
    <property type="term" value="C:extracellular region"/>
    <property type="evidence" value="ECO:0007669"/>
    <property type="project" value="UniProtKB-SubCell"/>
</dbReference>
<dbReference type="GO" id="GO:0008810">
    <property type="term" value="F:cellulase activity"/>
    <property type="evidence" value="ECO:0007669"/>
    <property type="project" value="InterPro"/>
</dbReference>
<dbReference type="GO" id="GO:0033946">
    <property type="term" value="F:xyloglucan-specific endo-beta-1,4-glucanase activity"/>
    <property type="evidence" value="ECO:0007669"/>
    <property type="project" value="UniProtKB-EC"/>
</dbReference>
<dbReference type="GO" id="GO:0071555">
    <property type="term" value="P:cell wall organization"/>
    <property type="evidence" value="ECO:0007669"/>
    <property type="project" value="UniProtKB-KW"/>
</dbReference>
<dbReference type="GO" id="GO:0000272">
    <property type="term" value="P:polysaccharide catabolic process"/>
    <property type="evidence" value="ECO:0007669"/>
    <property type="project" value="UniProtKB-KW"/>
</dbReference>
<dbReference type="Gene3D" id="2.60.120.180">
    <property type="match status" value="1"/>
</dbReference>
<dbReference type="InterPro" id="IPR013320">
    <property type="entry name" value="ConA-like_dom_sf"/>
</dbReference>
<dbReference type="InterPro" id="IPR013319">
    <property type="entry name" value="GH11/12"/>
</dbReference>
<dbReference type="InterPro" id="IPR002594">
    <property type="entry name" value="GH12"/>
</dbReference>
<dbReference type="PANTHER" id="PTHR34002">
    <property type="entry name" value="BLR1656 PROTEIN"/>
    <property type="match status" value="1"/>
</dbReference>
<dbReference type="PANTHER" id="PTHR34002:SF9">
    <property type="entry name" value="XYLOGLUCAN-SPECIFIC ENDO-BETA-1,4-GLUCANASE A"/>
    <property type="match status" value="1"/>
</dbReference>
<dbReference type="Pfam" id="PF01670">
    <property type="entry name" value="Glyco_hydro_12"/>
    <property type="match status" value="1"/>
</dbReference>
<dbReference type="SUPFAM" id="SSF49899">
    <property type="entry name" value="Concanavalin A-like lectins/glucanases"/>
    <property type="match status" value="1"/>
</dbReference>
<sequence>MKFNLALALSLTVATAEAATELCKQWDSIIEGNFIVYNNLWGQGNADDGGHQCTTVKSISGDTVVWSTEWAWSGGPGQVKSYANAALQFTPTTLSSVSSIDSTWKWRDSYTGSDIVANVAYDMFLSSSATGSEEYEIMVWLAALGGAGPISSTGSPIATPTINGVQWDLYLGPNGAMQVYSFVAPSSTENFAGDMKGFIDYLTSEQGLSKDLYLLDVQAGTEPFSGSDAVLTVSEYSVNLA</sequence>
<reference key="1">
    <citation type="journal article" date="2008" name="PLoS Genet.">
        <title>Genomic islands in the pathogenic filamentous fungus Aspergillus fumigatus.</title>
        <authorList>
            <person name="Fedorova N.D."/>
            <person name="Khaldi N."/>
            <person name="Joardar V.S."/>
            <person name="Maiti R."/>
            <person name="Amedeo P."/>
            <person name="Anderson M.J."/>
            <person name="Crabtree J."/>
            <person name="Silva J.C."/>
            <person name="Badger J.H."/>
            <person name="Albarraq A."/>
            <person name="Angiuoli S."/>
            <person name="Bussey H."/>
            <person name="Bowyer P."/>
            <person name="Cotty P.J."/>
            <person name="Dyer P.S."/>
            <person name="Egan A."/>
            <person name="Galens K."/>
            <person name="Fraser-Liggett C.M."/>
            <person name="Haas B.J."/>
            <person name="Inman J.M."/>
            <person name="Kent R."/>
            <person name="Lemieux S."/>
            <person name="Malavazi I."/>
            <person name="Orvis J."/>
            <person name="Roemer T."/>
            <person name="Ronning C.M."/>
            <person name="Sundaram J.P."/>
            <person name="Sutton G."/>
            <person name="Turner G."/>
            <person name="Venter J.C."/>
            <person name="White O.R."/>
            <person name="Whitty B.R."/>
            <person name="Youngman P."/>
            <person name="Wolfe K.H."/>
            <person name="Goldman G.H."/>
            <person name="Wortman J.R."/>
            <person name="Jiang B."/>
            <person name="Denning D.W."/>
            <person name="Nierman W.C."/>
        </authorList>
    </citation>
    <scope>NUCLEOTIDE SEQUENCE [LARGE SCALE GENOMIC DNA]</scope>
    <source>
        <strain>ATCC 1007 / CBS 513.65 / DSM 816 / NCTC 3887 / NRRL 1 / QM 1276 / 107</strain>
    </source>
</reference>
<feature type="signal peptide" evidence="2">
    <location>
        <begin position="1"/>
        <end position="18"/>
    </location>
</feature>
<feature type="chain" id="PRO_0000394069" description="Probable xyloglucan-specific endo-beta-1,4-glucanase A">
    <location>
        <begin position="19"/>
        <end position="241"/>
    </location>
</feature>
<name>XGEA_ASPCL</name>
<keyword id="KW-0119">Carbohydrate metabolism</keyword>
<keyword id="KW-0961">Cell wall biogenesis/degradation</keyword>
<keyword id="KW-0326">Glycosidase</keyword>
<keyword id="KW-0378">Hydrolase</keyword>
<keyword id="KW-0624">Polysaccharide degradation</keyword>
<keyword id="KW-1185">Reference proteome</keyword>
<keyword id="KW-0964">Secreted</keyword>
<keyword id="KW-0732">Signal</keyword>